<feature type="signal peptide" evidence="2">
    <location>
        <begin position="1"/>
        <end position="25"/>
    </location>
</feature>
<feature type="chain" id="PRO_0000309732" description="Multiple epidermal growth factor-like domains protein 10">
    <location>
        <begin position="26"/>
        <end position="1140"/>
    </location>
</feature>
<feature type="topological domain" description="Extracellular" evidence="2">
    <location>
        <begin position="26"/>
        <end position="857"/>
    </location>
</feature>
<feature type="transmembrane region" description="Helical" evidence="2">
    <location>
        <begin position="858"/>
        <end position="878"/>
    </location>
</feature>
<feature type="topological domain" description="Cytoplasmic" evidence="2">
    <location>
        <begin position="879"/>
        <end position="1140"/>
    </location>
</feature>
<feature type="domain" description="EMI" evidence="4">
    <location>
        <begin position="30"/>
        <end position="107"/>
    </location>
</feature>
<feature type="domain" description="EGF-like 1" evidence="3">
    <location>
        <begin position="106"/>
        <end position="136"/>
    </location>
</feature>
<feature type="domain" description="EGF-like 2" evidence="3">
    <location>
        <begin position="144"/>
        <end position="179"/>
    </location>
</feature>
<feature type="domain" description="EGF-like 3" evidence="3">
    <location>
        <begin position="187"/>
        <end position="222"/>
    </location>
</feature>
<feature type="domain" description="EGF-like 4" evidence="3">
    <location>
        <begin position="230"/>
        <end position="265"/>
    </location>
</feature>
<feature type="domain" description="EGF-like 5" evidence="3">
    <location>
        <begin position="278"/>
        <end position="308"/>
    </location>
</feature>
<feature type="domain" description="EGF-like 6" evidence="3">
    <location>
        <begin position="316"/>
        <end position="351"/>
    </location>
</feature>
<feature type="domain" description="EGF-like 7" evidence="3">
    <location>
        <begin position="405"/>
        <end position="440"/>
    </location>
</feature>
<feature type="domain" description="EGF-like 8" evidence="3">
    <location>
        <begin position="453"/>
        <end position="483"/>
    </location>
</feature>
<feature type="domain" description="EGF-like 9" evidence="3">
    <location>
        <begin position="491"/>
        <end position="526"/>
    </location>
</feature>
<feature type="domain" description="EGF-like 10" evidence="3">
    <location>
        <begin position="539"/>
        <end position="569"/>
    </location>
</feature>
<feature type="domain" description="EGF-like 11" evidence="3">
    <location>
        <begin position="577"/>
        <end position="612"/>
    </location>
</feature>
<feature type="domain" description="EGF-like 12" evidence="3">
    <location>
        <begin position="665"/>
        <end position="700"/>
    </location>
</feature>
<feature type="domain" description="EGF-like 13" evidence="3">
    <location>
        <begin position="713"/>
        <end position="743"/>
    </location>
</feature>
<feature type="domain" description="EGF-like 14" evidence="3">
    <location>
        <begin position="751"/>
        <end position="786"/>
    </location>
</feature>
<feature type="domain" description="EGF-like 15" evidence="3">
    <location>
        <begin position="799"/>
        <end position="829"/>
    </location>
</feature>
<feature type="region of interest" description="Necessary for interaction with AP2M1, self-assembly and formation of the irregular, mosaic-like adhesion pattern" evidence="8">
    <location>
        <begin position="1"/>
        <end position="857"/>
    </location>
</feature>
<feature type="region of interest" description="Necessary for formation of large intracellular vacuoles">
    <location>
        <begin position="945"/>
        <end position="1140"/>
    </location>
</feature>
<feature type="region of interest" description="Disordered" evidence="5">
    <location>
        <begin position="1111"/>
        <end position="1140"/>
    </location>
</feature>
<feature type="compositionally biased region" description="Low complexity" evidence="5">
    <location>
        <begin position="1128"/>
        <end position="1140"/>
    </location>
</feature>
<feature type="modified residue" description="Phosphotyrosine; by SRC" evidence="12">
    <location>
        <position position="1030"/>
    </location>
</feature>
<feature type="glycosylation site" description="N-linked (GlcNAc...) asparagine" evidence="2">
    <location>
        <position position="134"/>
    </location>
</feature>
<feature type="glycosylation site" description="N-linked (GlcNAc...) asparagine" evidence="2">
    <location>
        <position position="496"/>
    </location>
</feature>
<feature type="disulfide bond" evidence="2">
    <location>
        <begin position="34"/>
        <end position="95"/>
    </location>
</feature>
<feature type="disulfide bond" evidence="2">
    <location>
        <begin position="60"/>
        <end position="69"/>
    </location>
</feature>
<feature type="disulfide bond" evidence="2">
    <location>
        <begin position="94"/>
        <end position="105"/>
    </location>
</feature>
<feature type="disulfide bond" evidence="1">
    <location>
        <begin position="109"/>
        <end position="118"/>
    </location>
</feature>
<feature type="disulfide bond" evidence="1">
    <location>
        <begin position="113"/>
        <end position="124"/>
    </location>
</feature>
<feature type="disulfide bond" evidence="1">
    <location>
        <begin position="126"/>
        <end position="135"/>
    </location>
</feature>
<feature type="disulfide bond" evidence="1">
    <location>
        <begin position="148"/>
        <end position="160"/>
    </location>
</feature>
<feature type="disulfide bond" evidence="1">
    <location>
        <begin position="154"/>
        <end position="167"/>
    </location>
</feature>
<feature type="disulfide bond" evidence="1">
    <location>
        <begin position="169"/>
        <end position="178"/>
    </location>
</feature>
<feature type="disulfide bond" evidence="1">
    <location>
        <begin position="191"/>
        <end position="203"/>
    </location>
</feature>
<feature type="disulfide bond" evidence="1">
    <location>
        <begin position="197"/>
        <end position="210"/>
    </location>
</feature>
<feature type="disulfide bond" evidence="1">
    <location>
        <begin position="212"/>
        <end position="221"/>
    </location>
</feature>
<feature type="disulfide bond" evidence="1">
    <location>
        <begin position="234"/>
        <end position="246"/>
    </location>
</feature>
<feature type="disulfide bond" evidence="1">
    <location>
        <begin position="240"/>
        <end position="253"/>
    </location>
</feature>
<feature type="disulfide bond" evidence="1">
    <location>
        <begin position="255"/>
        <end position="264"/>
    </location>
</feature>
<feature type="disulfide bond" evidence="1">
    <location>
        <begin position="281"/>
        <end position="289"/>
    </location>
</feature>
<feature type="disulfide bond" evidence="1">
    <location>
        <begin position="283"/>
        <end position="296"/>
    </location>
</feature>
<feature type="disulfide bond" evidence="1">
    <location>
        <begin position="298"/>
        <end position="307"/>
    </location>
</feature>
<feature type="disulfide bond" evidence="1">
    <location>
        <begin position="320"/>
        <end position="332"/>
    </location>
</feature>
<feature type="disulfide bond" evidence="1">
    <location>
        <begin position="326"/>
        <end position="339"/>
    </location>
</feature>
<feature type="disulfide bond" evidence="1">
    <location>
        <begin position="341"/>
        <end position="350"/>
    </location>
</feature>
<feature type="disulfide bond" evidence="1">
    <location>
        <begin position="409"/>
        <end position="421"/>
    </location>
</feature>
<feature type="disulfide bond" evidence="1">
    <location>
        <begin position="415"/>
        <end position="428"/>
    </location>
</feature>
<feature type="disulfide bond" evidence="1">
    <location>
        <begin position="430"/>
        <end position="439"/>
    </location>
</feature>
<feature type="disulfide bond" evidence="1">
    <location>
        <begin position="456"/>
        <end position="464"/>
    </location>
</feature>
<feature type="disulfide bond" evidence="1">
    <location>
        <begin position="458"/>
        <end position="471"/>
    </location>
</feature>
<feature type="disulfide bond" evidence="1">
    <location>
        <begin position="473"/>
        <end position="482"/>
    </location>
</feature>
<feature type="disulfide bond" evidence="1">
    <location>
        <begin position="495"/>
        <end position="507"/>
    </location>
</feature>
<feature type="disulfide bond" evidence="1">
    <location>
        <begin position="501"/>
        <end position="514"/>
    </location>
</feature>
<feature type="disulfide bond" evidence="1">
    <location>
        <begin position="516"/>
        <end position="525"/>
    </location>
</feature>
<feature type="disulfide bond" evidence="1">
    <location>
        <begin position="542"/>
        <end position="550"/>
    </location>
</feature>
<feature type="disulfide bond" evidence="1">
    <location>
        <begin position="544"/>
        <end position="557"/>
    </location>
</feature>
<feature type="disulfide bond" evidence="1">
    <location>
        <begin position="559"/>
        <end position="568"/>
    </location>
</feature>
<feature type="disulfide bond" evidence="1">
    <location>
        <begin position="581"/>
        <end position="593"/>
    </location>
</feature>
<feature type="disulfide bond" evidence="1">
    <location>
        <begin position="587"/>
        <end position="600"/>
    </location>
</feature>
<feature type="disulfide bond" evidence="1">
    <location>
        <begin position="602"/>
        <end position="611"/>
    </location>
</feature>
<feature type="disulfide bond" evidence="1">
    <location>
        <begin position="669"/>
        <end position="681"/>
    </location>
</feature>
<feature type="disulfide bond" evidence="1">
    <location>
        <begin position="675"/>
        <end position="688"/>
    </location>
</feature>
<feature type="disulfide bond" evidence="1">
    <location>
        <begin position="690"/>
        <end position="699"/>
    </location>
</feature>
<feature type="disulfide bond" evidence="1">
    <location>
        <begin position="716"/>
        <end position="724"/>
    </location>
</feature>
<feature type="disulfide bond" evidence="1">
    <location>
        <begin position="718"/>
        <end position="731"/>
    </location>
</feature>
<feature type="disulfide bond" evidence="1">
    <location>
        <begin position="733"/>
        <end position="742"/>
    </location>
</feature>
<feature type="disulfide bond" evidence="1">
    <location>
        <begin position="755"/>
        <end position="767"/>
    </location>
</feature>
<feature type="disulfide bond" evidence="1">
    <location>
        <begin position="761"/>
        <end position="774"/>
    </location>
</feature>
<feature type="disulfide bond" evidence="1">
    <location>
        <begin position="776"/>
        <end position="785"/>
    </location>
</feature>
<feature type="disulfide bond" evidence="1">
    <location>
        <begin position="802"/>
        <end position="810"/>
    </location>
</feature>
<feature type="disulfide bond" evidence="1">
    <location>
        <begin position="804"/>
        <end position="817"/>
    </location>
</feature>
<feature type="disulfide bond" evidence="1">
    <location>
        <begin position="819"/>
        <end position="828"/>
    </location>
</feature>
<feature type="splice variant" id="VSP_029244" description="In isoform 2." evidence="19">
    <original>VH</original>
    <variation>LF</variation>
    <location>
        <begin position="566"/>
        <end position="567"/>
    </location>
</feature>
<feature type="splice variant" id="VSP_029245" description="In isoform 2." evidence="19">
    <location>
        <begin position="568"/>
        <end position="1140"/>
    </location>
</feature>
<feature type="sequence variant" id="VAR_067469" description="In CMYO10B; uncertain significance; dbSNP:rs387907074." evidence="11 18">
    <original>R</original>
    <variation>W</variation>
    <location>
        <position position="71"/>
    </location>
</feature>
<feature type="sequence variant" id="VAR_088236" description="In CMYO10B; uncertain significance." evidence="16">
    <original>C</original>
    <variation>R</variation>
    <location>
        <position position="118"/>
    </location>
</feature>
<feature type="sequence variant" id="VAR_036988" description="In dbSNP:rs3812054.">
    <original>V</original>
    <variation>I</variation>
    <location>
        <position position="206"/>
    </location>
</feature>
<feature type="sequence variant" id="VAR_067470" description="In CMYO10B; slightly decreased tyrosine phosphorylation; slightly reduced apoptotic cell engulfement by astrocytes; no effect on cell membrane location; no effect on binding to C1q; no effect on myoblasts migration and proliferation; no effect on interaction with NOTCH1; dbSNP:rs387907073." evidence="11 12 13 14 15 18">
    <original>C</original>
    <variation>R</variation>
    <location>
        <position position="326"/>
    </location>
</feature>
<feature type="sequence variant" id="VAR_088237" description="In CMYO10B; uncertain significance." evidence="17">
    <original>C</original>
    <variation>S</variation>
    <location>
        <position position="699"/>
    </location>
</feature>
<feature type="sequence variant" id="VAR_067471" description="In CMYO10B and CMYO10A; impaired tyrosine phosphorylation; no effect on cell membrane location; impairs binding to C1q; reduced apoptotic cell engulfement by astrocytes by 50%; reduced myoblast migration and proliferation; decreased interaction with NOTCH1; no effect on NOTCH1 nuclear location; dbSNP:rs387907072." evidence="10 11 12 13 14 15 18">
    <original>C</original>
    <variation>R</variation>
    <location>
        <position position="774"/>
    </location>
</feature>
<feature type="sequence variant" id="VAR_088238" description="In CMYO10B; uncertain significance; impaired tyrosine phosphorylation." evidence="14">
    <original>C</original>
    <variation>Y</variation>
    <location>
        <position position="810"/>
    </location>
</feature>
<feature type="sequence variant" id="VAR_046377" description="In dbSNP:rs13183625.">
    <original>P</original>
    <variation>L</variation>
    <location>
        <position position="897"/>
    </location>
</feature>
<feature type="sequence variant" id="VAR_081905" description="Found in a patient with a late-onset mild myopathy and still ambulatory in late adulthood; uncertain significance; dbSNP:rs1433266858." evidence="18">
    <original>Y</original>
    <variation>C</variation>
    <location>
        <position position="1030"/>
    </location>
</feature>
<feature type="sequence variant" id="VAR_036989" description="In dbSNP:rs17164935.">
    <original>R</original>
    <variation>K</variation>
    <location>
        <position position="1072"/>
    </location>
</feature>
<feature type="mutagenesis site" description="Does not interact with GULP1; when associated with A-930." evidence="6">
    <original>N</original>
    <variation>A</variation>
    <location>
        <position position="927"/>
    </location>
</feature>
<feature type="mutagenesis site" description="Does not interact with GULP1; when associated with A-927." evidence="6">
    <original>Y</original>
    <variation>A</variation>
    <location>
        <position position="930"/>
    </location>
</feature>
<feature type="mutagenesis site" description="Enhances cell proliferation." evidence="12">
    <original>Y</original>
    <variation>D</variation>
    <location>
        <position position="1030"/>
    </location>
</feature>
<feature type="mutagenesis site" description="Abolishes tyrosine phosphorylation. Unable to enhance cell proliferation." evidence="12">
    <original>Y</original>
    <variation>F</variation>
    <location>
        <position position="1030"/>
    </location>
</feature>
<feature type="sequence conflict" description="In Ref. 2; CAH18275." evidence="20" ref="2">
    <original>D</original>
    <variation>G</variation>
    <location>
        <position position="543"/>
    </location>
</feature>
<proteinExistence type="evidence at protein level"/>
<organism>
    <name type="scientific">Homo sapiens</name>
    <name type="common">Human</name>
    <dbReference type="NCBI Taxonomy" id="9606"/>
    <lineage>
        <taxon>Eukaryota</taxon>
        <taxon>Metazoa</taxon>
        <taxon>Chordata</taxon>
        <taxon>Craniata</taxon>
        <taxon>Vertebrata</taxon>
        <taxon>Euteleostomi</taxon>
        <taxon>Mammalia</taxon>
        <taxon>Eutheria</taxon>
        <taxon>Euarchontoglires</taxon>
        <taxon>Primates</taxon>
        <taxon>Haplorrhini</taxon>
        <taxon>Catarrhini</taxon>
        <taxon>Hominidae</taxon>
        <taxon>Homo</taxon>
    </lineage>
</organism>
<reference key="1">
    <citation type="journal article" date="2001" name="DNA Res.">
        <title>Prediction of the coding sequences of unidentified human genes. XX. The complete sequences of 100 new cDNA clones from brain which code for large proteins in vitro.</title>
        <authorList>
            <person name="Nagase T."/>
            <person name="Nakayama M."/>
            <person name="Nakajima D."/>
            <person name="Kikuno R."/>
            <person name="Ohara O."/>
        </authorList>
    </citation>
    <scope>NUCLEOTIDE SEQUENCE [LARGE SCALE MRNA] (ISOFORM 1)</scope>
    <source>
        <tissue>Brain</tissue>
    </source>
</reference>
<reference key="2">
    <citation type="journal article" date="2007" name="BMC Genomics">
        <title>The full-ORF clone resource of the German cDNA consortium.</title>
        <authorList>
            <person name="Bechtel S."/>
            <person name="Rosenfelder H."/>
            <person name="Duda A."/>
            <person name="Schmidt C.P."/>
            <person name="Ernst U."/>
            <person name="Wellenreuther R."/>
            <person name="Mehrle A."/>
            <person name="Schuster C."/>
            <person name="Bahr A."/>
            <person name="Bloecker H."/>
            <person name="Heubner D."/>
            <person name="Hoerlein A."/>
            <person name="Michel G."/>
            <person name="Wedler H."/>
            <person name="Koehrer K."/>
            <person name="Ottenwaelder B."/>
            <person name="Poustka A."/>
            <person name="Wiemann S."/>
            <person name="Schupp I."/>
        </authorList>
    </citation>
    <scope>NUCLEOTIDE SEQUENCE [LARGE SCALE MRNA] (ISOFORM 1)</scope>
    <source>
        <tissue>Retina</tissue>
    </source>
</reference>
<reference key="3">
    <citation type="submission" date="2005-09" db="EMBL/GenBank/DDBJ databases">
        <authorList>
            <person name="Mural R.J."/>
            <person name="Istrail S."/>
            <person name="Sutton G.G."/>
            <person name="Florea L."/>
            <person name="Halpern A.L."/>
            <person name="Mobarry C.M."/>
            <person name="Lippert R."/>
            <person name="Walenz B."/>
            <person name="Shatkay H."/>
            <person name="Dew I."/>
            <person name="Miller J.R."/>
            <person name="Flanigan M.J."/>
            <person name="Edwards N.J."/>
            <person name="Bolanos R."/>
            <person name="Fasulo D."/>
            <person name="Halldorsson B.V."/>
            <person name="Hannenhalli S."/>
            <person name="Turner R."/>
            <person name="Yooseph S."/>
            <person name="Lu F."/>
            <person name="Nusskern D.R."/>
            <person name="Shue B.C."/>
            <person name="Zheng X.H."/>
            <person name="Zhong F."/>
            <person name="Delcher A.L."/>
            <person name="Huson D.H."/>
            <person name="Kravitz S.A."/>
            <person name="Mouchard L."/>
            <person name="Reinert K."/>
            <person name="Remington K.A."/>
            <person name="Clark A.G."/>
            <person name="Waterman M.S."/>
            <person name="Eichler E.E."/>
            <person name="Adams M.D."/>
            <person name="Hunkapiller M.W."/>
            <person name="Myers E.W."/>
            <person name="Venter J.C."/>
        </authorList>
    </citation>
    <scope>NUCLEOTIDE SEQUENCE [LARGE SCALE GENOMIC DNA]</scope>
</reference>
<reference key="4">
    <citation type="journal article" date="2004" name="Genome Res.">
        <title>The status, quality, and expansion of the NIH full-length cDNA project: the Mammalian Gene Collection (MGC).</title>
        <authorList>
            <consortium name="The MGC Project Team"/>
        </authorList>
    </citation>
    <scope>NUCLEOTIDE SEQUENCE [LARGE SCALE MRNA] (ISOFORM 2)</scope>
    <source>
        <tissue>Muscle</tissue>
    </source>
</reference>
<reference key="5">
    <citation type="journal article" date="2006" name="PLoS ONE">
        <title>Cooperation between engulfment receptors: the case of ABCA1 and MEGF10.</title>
        <authorList>
            <person name="Hamon Y."/>
            <person name="Trompier D."/>
            <person name="Ma Z."/>
            <person name="Venegas V."/>
            <person name="Pophillat M."/>
            <person name="Mignotte V."/>
            <person name="Zhou Z."/>
            <person name="Chimini G."/>
        </authorList>
    </citation>
    <scope>INTERACTION WITH GULP1 AND ABCA1</scope>
    <scope>MUTAGENESIS OF ASN-927 AND TYR-930</scope>
    <scope>SUBCELLULAR LOCATION</scope>
</reference>
<reference key="6">
    <citation type="journal article" date="2007" name="Exp. Cell Res.">
        <title>The mammalian Ced-1 ortholog MEGF10/KIAA1780 displays a novel adhesion pattern.</title>
        <authorList>
            <person name="Suzuki E."/>
            <person name="Nakayama M."/>
        </authorList>
    </citation>
    <scope>FUNCTION</scope>
    <scope>SUBUNIT</scope>
    <scope>SUBCELLULAR LOCATION</scope>
    <scope>TISSUE SPECIFICITY</scope>
</reference>
<reference key="7">
    <citation type="journal article" date="2007" name="Exp. Cell Res.">
        <title>MEGF10 is a mammalian ortholog of CED-1 that interacts with clathrin assembly protein complex 2 medium chain and induces large vacuole formation.</title>
        <authorList>
            <person name="Suzuki E."/>
            <person name="Nakayama M."/>
        </authorList>
    </citation>
    <scope>FUNCTION</scope>
    <scope>IDENTIFICATION BY MASS SPECTROMETRY</scope>
    <scope>INTERACTION WITH AP2M1 AND GULP1</scope>
    <scope>PHOSPHORYLATION</scope>
    <scope>UBIQUITINATION</scope>
</reference>
<reference key="8">
    <citation type="journal article" date="2010" name="FEBS Lett.">
        <title>MEGF10 functions as a receptor for the uptake of amyloid-beta.</title>
        <authorList>
            <person name="Singh T.D."/>
            <person name="Park S.Y."/>
            <person name="Bae J.S."/>
            <person name="Yun Y."/>
            <person name="Bae Y.C."/>
            <person name="Park R.W."/>
            <person name="Kim I.S."/>
        </authorList>
    </citation>
    <scope>FUNCTION IN ENDOCYTOSIS</scope>
</reference>
<reference key="9">
    <citation type="journal article" date="2011" name="Nat. Genet.">
        <title>Mutations in MEGF10, a regulator of satellite cell myogenesis, cause early onset myopathy, areflexia, respiratory distress and dysphagia (EMARDD).</title>
        <authorList>
            <person name="Logan C.V."/>
            <person name="Lucke B."/>
            <person name="Pottinger C."/>
            <person name="Abdelhamed Z.A."/>
            <person name="Parry D.A."/>
            <person name="Szymanska K."/>
            <person name="Diggle C.P."/>
            <person name="Riesen A."/>
            <person name="Morgan J.E."/>
            <person name="Markham G."/>
            <person name="Ellis I."/>
            <person name="Manzur A.Y."/>
            <person name="Markham A.F."/>
            <person name="Shires M."/>
            <person name="Helliwell T."/>
            <person name="Scoto M."/>
            <person name="Hubner C."/>
            <person name="Bonthron D.T."/>
            <person name="Taylor G.R."/>
            <person name="Sheridan E."/>
            <person name="Muntoni F."/>
            <person name="Carr I.M."/>
            <person name="Schuelke M."/>
            <person name="Johnson C.A."/>
        </authorList>
    </citation>
    <scope>FUNCTION IN MYOGENESIS</scope>
    <scope>VARIANT CMYO10A ARG-774</scope>
</reference>
<reference key="10">
    <citation type="journal article" date="2012" name="Neurogenetics">
        <title>Mutations in the satellite cell gene MEGF10 cause a recessive congenital myopathy with minicores.</title>
        <authorList>
            <person name="Boyden S.E."/>
            <person name="Mahoney L.J."/>
            <person name="Kawahara G."/>
            <person name="Myers J.A."/>
            <person name="Mitsuhashi S."/>
            <person name="Estrella E.A."/>
            <person name="Duncan A.R."/>
            <person name="Dey F."/>
            <person name="Dechene E.T."/>
            <person name="Blasko-Goehringer J.M."/>
            <person name="Bonnemann C.G."/>
            <person name="Darras B.T."/>
            <person name="Mendell J.R."/>
            <person name="Lidov H.G."/>
            <person name="Nishino I."/>
            <person name="Beggs A.H."/>
            <person name="Kunkel L.M."/>
            <person name="Kang P.B."/>
        </authorList>
    </citation>
    <scope>INVOLVEMENT IN CMYO10B</scope>
    <scope>VARIANTS CMYO10B TRP-71; ARG-326 AND ARG-774</scope>
</reference>
<reference key="11">
    <citation type="journal article" date="2013" name="FEBS Lett.">
        <title>Cysteine mutations cause defective tyrosine phosphorylation in MEGF10 myopathy.</title>
        <authorList>
            <person name="Mitsuhashi S."/>
            <person name="Mitsuhashi H."/>
            <person name="Alexander M.S."/>
            <person name="Sugimoto H."/>
            <person name="Kang P.B."/>
        </authorList>
    </citation>
    <scope>CHARACTERIZATION OF VARIANT CMYO10B ARG-326</scope>
    <scope>CHARACTERIZATION OF VARIANT CMYO10A/CMYO10B ARG-774</scope>
    <scope>MUTAGENESIS OF TYR-1030</scope>
    <scope>PHOSPHORYLATION AT TYR-1030</scope>
</reference>
<reference key="12">
    <citation type="journal article" date="2016" name="J. Neurosci.">
        <title>Megf10 Is a Receptor for C1Q That Mediates Clearance of Apoptotic Cells by Astrocytes.</title>
        <authorList>
            <person name="Iram T."/>
            <person name="Ramirez-Ortiz Z."/>
            <person name="Byrne M.H."/>
            <person name="Coleman U.A."/>
            <person name="Kingery N.D."/>
            <person name="Means T.K."/>
            <person name="Frenkel D."/>
            <person name="El Khoury J."/>
        </authorList>
    </citation>
    <scope>CHARACTERIZATION OF VARIANT CMYO10B ARG-326</scope>
    <scope>CHARACTERIZATION OF VARIANT CMYO10A/CMYO10B ARG-774</scope>
    <scope>FUNCTION</scope>
    <scope>INTERACTION WITH COMPLEMENT C1Q</scope>
    <scope>SUBCELLULAR LOCATION</scope>
</reference>
<reference key="13">
    <citation type="journal article" date="2016" name="Neuromuscul. Disord.">
        <title>Japanese multiple epidermal growth factor 10 (MEGF10) myopathy with novel mutations: A phenotype-genotype correlation.</title>
        <authorList>
            <person name="Takayama K."/>
            <person name="Mitsuhashi S."/>
            <person name="Shin J.Y."/>
            <person name="Tanaka R."/>
            <person name="Fujii T."/>
            <person name="Tsuburaya R."/>
            <person name="Mukaida S."/>
            <person name="Noguchi S."/>
            <person name="Nonaka I."/>
            <person name="Nishino I."/>
        </authorList>
    </citation>
    <scope>INVOLVEMENT IN CMYO10B</scope>
    <scope>INVOLVEMENT IN CMYO10A</scope>
    <scope>TISSUE SPECIFICITY</scope>
    <scope>VARIANT CMYO10B TYR-810</scope>
    <scope>CHARACTERIZATION OF VARIANTS CMYO10B ARG-326; ARG-774 AND TYR-810</scope>
</reference>
<reference key="14">
    <citation type="journal article" date="2017" name="Hum. Mol. Genet.">
        <title>Consequences of MEGF10 deficiency on myoblast function and Notch1 interactions.</title>
        <authorList>
            <person name="Saha M."/>
            <person name="Mitsuhashi S."/>
            <person name="Jones M.D."/>
            <person name="Manko K."/>
            <person name="Reddy H.M."/>
            <person name="Bruels C."/>
            <person name="Cho K.A."/>
            <person name="Pacak C.A."/>
            <person name="Draper I."/>
            <person name="Kang P.B."/>
        </authorList>
    </citation>
    <scope>CHARACTERIZATION OF VARIANT CMYO10B ARG-326</scope>
    <scope>CHARACTERIZATION OF VARIANT CMYO10A/CMYO10B ARG-774</scope>
    <scope>FUNCTION</scope>
    <scope>INTERACTION WITH NOTCH1</scope>
</reference>
<reference key="15">
    <citation type="journal article" date="2018" name="Neuromuscul. Disord.">
        <title>MEGF10 related myopathies: A new case with adult onset disease with prominent respiratory failure and review of reported phenotypes.</title>
        <authorList>
            <person name="Harris E."/>
            <person name="Marini-Bettolo C."/>
            <person name="Toepf A."/>
            <person name="Barresi R."/>
            <person name="Polvikoski T."/>
            <person name="Bailey G."/>
            <person name="Charlton R."/>
            <person name="Tellez J."/>
            <person name="MacArthur D."/>
            <person name="Guglieri M."/>
            <person name="Lochmueller H."/>
            <person name="Bushby K."/>
            <person name="Straub V."/>
        </authorList>
    </citation>
    <scope>INVOLVEMENT IN CMYO10B</scope>
    <scope>VARIANT CMYO10B ARG-118</scope>
</reference>
<reference key="16">
    <citation type="journal article" date="2019" name="Hum. Mol. Genet.">
        <title>Selective serotonin reuptake inhibitors ameliorate MEGF10 myopathy.</title>
        <authorList>
            <person name="Saha M."/>
            <person name="Rizzo S.A."/>
            <person name="Ramanathan M."/>
            <person name="Hightower R.M."/>
            <person name="Santostefano K.E."/>
            <person name="Terada N."/>
            <person name="Finkel R.S."/>
            <person name="Berg J.S."/>
            <person name="Chahin N."/>
            <person name="Pacak C.A."/>
            <person name="Wagner R.E."/>
            <person name="Alexander M.S."/>
            <person name="Draper I."/>
            <person name="Kang P.B."/>
        </authorList>
    </citation>
    <scope>VARIANT CMYO10A ARG-774</scope>
    <scope>VARIANT CYS-1030</scope>
    <scope>FUNCTION</scope>
</reference>
<reference key="17">
    <citation type="journal article" date="2022" name="Acta Myol.">
        <title>Congenital myopathy associated with a novel mutation in MEGF10 gene, myofibrillar alteration and progressive course.</title>
        <authorList>
            <person name="Croci C."/>
            <person name="Traverso M."/>
            <person name="Baratto S."/>
            <person name="Iacomino M."/>
            <person name="Pedemonte M."/>
            <person name="Caroli F."/>
            <person name="Scala M."/>
            <person name="Bruno C."/>
            <person name="Fiorillo C."/>
        </authorList>
    </citation>
    <scope>INVOLVEMENT IN CMYO10B</scope>
    <scope>VARIANT CMYO10B SER-699</scope>
</reference>
<sequence>MVISLNSCLSFICLLLCHWIGTASPLNLEDPNVCSHWESYSVTVQESYPHPFDQIYYTSCTDILNWFKCTRHRVSYRTAYRHGEKTMYRRKSQCCPGFYESGEMCVPHCADKCVHGRCIAPNTCQCEPGWGGTNCSSACDGDHWGPHCTSRCQCKNGALCNPITGACHCAAGFRGWRCEDRCEQGTYGNDCHQRCQCQNGATCDHVTGECRCPPGYTGAFCEDLCPPGKHGPQCEQRCPCQNGGVCHHVTGECSCPSGWMGTVCGQPCPEGRFGKNCSQECQCHNGGTCDAATGQCHCSPGYTGERCQDECPVGTYGVLCAETCQCVNGGKCYHVSGACLCEAGFAGERCEARLCPEGLYGIKCDKRCPCHLENTHSCHPMSGECACKPGWSGLYCNETCSPGFYGEACQQICSCQNGADCDSVTGKCTCAPGFKGIDCSTPCPLGTYGINCSSRCGCKNDAVCSPVDGSCTCKAGWHGVDCSIRCPSGTWGFGCNLTCQCLNGGACNTLDGTCTCAPGWRGEKCELPCQDGTYGLNCAERCDCSHADGCHPTTGHCRCLPGWSGVHCDSVCAEGRWGPNCSLPCYCKNGASCSPDDGICECAPGFRGTTCQRICSPGFYGHRCSQTCPQCVHSSGPCHHITGLCDCLPGFTGALCNEVCPSGRFGKNCAGICTCTNNGTCNPIDRSCQCYPGWIGSDCSQPCPPAHWGPNCIHTCNCHNGAFCSAYDGECKCTPGWTGLYCTQRCPLGFYGKDCALICQCQNGADCDHISGQCTCRTGFMGRHCEQKCPSGTYGYGCRQICDCLNNSTCDHITGTCYCSPGWKGARCDQAGVIIVGNLNSLSRTSTALPADSYQIGAIAGIIILVLVVLFLLALFIIYRHKQKGKESSMPAVTYTPAMRVVNADYTISGTLPHSNGGNANSHYFTNPSYHTLTQCATSPHVNNRDRMTVTKSKNNQLFVNLKNVNPGKRGPVGDCTGTLPADWKHGGYLNELGAFGLDRSYMGKSLKDLGKNSEYNSSNCSLSSSENPYATIKDPPVLIPKSSECGYVEMKSPARRDSPYAEINNSTSANRNVYEVEPTVSVVQGVFSNNGRLSQDPYDLPKNSHIPCHYDLLPVRDSSSSPKQEDSGGSSSNSSSSSE</sequence>
<protein>
    <recommendedName>
        <fullName evidence="21">Multiple epidermal growth factor-like domains protein 10</fullName>
        <shortName evidence="20">Multiple EGF-like domains protein 10</shortName>
    </recommendedName>
</protein>
<comment type="function">
    <text evidence="6 7 8 9 10 13 15 18">Membrane receptor involved in phagocytosis by macrophages and astrocytes of apoptotic cells. Receptor for C1q, an eat-me signal, that binds phosphatidylserine expressed on the surface of apoptotic cells (PubMed:27170117). Cooperates with ABCA1 within the process of engulfment. Promotes the formation of large intracellular vacuoles and may be responsible for the uptake of amyloid-beta peptides (PubMed:17643423, PubMed:20828568). Necessary for astrocyte-dependent apoptotic neuron clearance in the developing cerebellum (PubMed:27170117). Plays role in muscle cell proliferation, adhesion and motility. Is also an essential factor in the regulation of myogenesis. Controls the balance between skeletal muscle satellite cells proliferation and differentiation through regulation of the notch signaling pathway (PubMed:28498977, Ref.16). May also function in the mosaic spacing of specific neuron subtypes in the retina through homotypic retinal neuron repulsion. Mosaics provide a mechanism to distribute each cell type evenly across the retina, ensuring that all parts of the visual field have access to a full set of processing elements (PubMed:17498693, PubMed:17643423, PubMed:20828568, PubMed:22101682, PubMed:27170117, PubMed:28498977).</text>
</comment>
<comment type="subunit">
    <text evidence="6 7 8 13 15">Homomer (Probable). Interacts with GULP1 and ABCA1. Interacts with AP2M1 (PubMed:17643423). Does not interact with MEGF11 (PubMed:17498693). Binds with high affinity to complement C1q (PubMed:27170117). Interacts (via the cytoplasmic domain) with NOTCH1 (via NICD domain) (PubMed:28498977).</text>
</comment>
<comment type="subcellular location">
    <subcellularLocation>
        <location evidence="13">Cell membrane</location>
        <topology>Single-pass type I membrane protein</topology>
    </subcellularLocation>
    <subcellularLocation>
        <location evidence="6">Cell projection</location>
        <location evidence="6">Phagocytic cup</location>
    </subcellularLocation>
    <text evidence="6 7">Enriched at the sites of contact with apoptotic thymocyte cells (PubMed:17205124). Forms an irregular, mosaic-like adhesion pattern in region of the cell surface that becomes firmely fixed to the substrate. Expressed at the cell surface in clusters around cell corpses during engulfment. During the engulfment of apoptotic thymocytes, recruited at the bottom of the forming phagocytic cup (PubMed:17498693). Colocalizes with ABCA1 in absence of any phagocytic challenge (PubMed:17205124). Does not localize within lamellipodia (PubMed:17498693). Does not localize with MEGF11 (PubMed:17498693).</text>
</comment>
<comment type="alternative products">
    <event type="alternative splicing"/>
    <isoform>
        <id>Q96KG7-1</id>
        <name>1</name>
        <sequence type="displayed"/>
    </isoform>
    <isoform>
        <id>Q96KG7-2</id>
        <name>2</name>
        <sequence type="described" ref="VSP_029244 VSP_029245"/>
    </isoform>
</comment>
<comment type="tissue specificity">
    <text evidence="14">Expressed in muscle (at protein level).</text>
</comment>
<comment type="domain">
    <text>The EMI and EGF-like domains work in concert to promote self-assembly.</text>
</comment>
<comment type="PTM">
    <text evidence="8 12">Phosphorylated on tyrosine residues. Phosphorylation at Tyr-1030 may be important for muscle cell proliferation.</text>
</comment>
<comment type="PTM">
    <text evidence="8">Ubiquitinated; mono- and polyubiquitinated forms are detected.</text>
</comment>
<comment type="disease" evidence="10 12 13 15 18">
    <disease id="DI-03358">
        <name>Congenital myopathy 10A, severe variant</name>
        <acronym>CMYO10A</acronym>
        <description>An autosomal recessive congenital myopathy characterized by onset at birth, or early in infancy, of respiratory distress caused by diaphragmatic weakness. Additional features are dysphagia resulting in poor feeding, failure to thrive, poor head control, facial weakness, cleft palate, contractures and scoliosis. Affected individuals become ventilator-dependent, and most require feeding by gastrostomy. The disorder results in severe muscle weakness and most patients never achieve walking. Death from respiratory failure in childhood occurs in about half of patients. Muscle biopsies from affected individuals show myopathic changes, replacement of myofibers with fatty tissue, small and incompletely fused muscle fibers, and variation in fiber size. Short regions of sarcomeric disorganization with few or no mitochondria (minicores) have been observed in some cases.</description>
        <dbReference type="MIM" id="614399"/>
    </disease>
    <text>The disease is caused by variants affecting the gene represented in this entry.</text>
</comment>
<comment type="disease" evidence="11 12 13 14 15 16 17">
    <disease id="DI-06620">
        <name>Congenital myopathy 10B, mild variant</name>
        <acronym>CMYO10B</acronym>
        <description>An autosomal recessive skeletal muscle disorder characterized by infantile or childhood onset of proximal and distal weakness of upper and lower limbs, facial weakness, areflexia, dysphagia, and respiratory distress. Muscle biopsy shows myopathic changes including type 1 fiber predominance, minicore lesions, and myofibrillar disorganization.</description>
        <dbReference type="MIM" id="620249"/>
    </disease>
    <text>The disease is caused by variants affecting the gene represented in this entry.</text>
</comment>
<comment type="similarity">
    <text evidence="20">Belongs to the MEGF family.</text>
</comment>
<comment type="sequence caution" evidence="20">
    <conflict type="erroneous initiation">
        <sequence resource="EMBL-CDS" id="BAB47409"/>
    </conflict>
    <text>Extended N-terminus.</text>
</comment>
<gene>
    <name evidence="21" type="primary">MEGF10</name>
    <name type="synonym">KIAA1780</name>
</gene>
<keyword id="KW-0025">Alternative splicing</keyword>
<keyword id="KW-0130">Cell adhesion</keyword>
<keyword id="KW-1003">Cell membrane</keyword>
<keyword id="KW-0966">Cell projection</keyword>
<keyword id="KW-0225">Disease variant</keyword>
<keyword id="KW-1015">Disulfide bond</keyword>
<keyword id="KW-0245">EGF-like domain</keyword>
<keyword id="KW-0325">Glycoprotein</keyword>
<keyword id="KW-0472">Membrane</keyword>
<keyword id="KW-0517">Myogenesis</keyword>
<keyword id="KW-0581">Phagocytosis</keyword>
<keyword id="KW-0597">Phosphoprotein</keyword>
<keyword id="KW-1267">Proteomics identification</keyword>
<keyword id="KW-1185">Reference proteome</keyword>
<keyword id="KW-0677">Repeat</keyword>
<keyword id="KW-0732">Signal</keyword>
<keyword id="KW-0812">Transmembrane</keyword>
<keyword id="KW-1133">Transmembrane helix</keyword>
<keyword id="KW-0832">Ubl conjugation</keyword>
<accession>Q96KG7</accession>
<accession>Q68DE5</accession>
<accession>Q8WUL3</accession>
<evidence type="ECO:0000250" key="1"/>
<evidence type="ECO:0000255" key="2"/>
<evidence type="ECO:0000255" key="3">
    <source>
        <dbReference type="PROSITE-ProRule" id="PRU00076"/>
    </source>
</evidence>
<evidence type="ECO:0000255" key="4">
    <source>
        <dbReference type="PROSITE-ProRule" id="PRU00384"/>
    </source>
</evidence>
<evidence type="ECO:0000256" key="5">
    <source>
        <dbReference type="SAM" id="MobiDB-lite"/>
    </source>
</evidence>
<evidence type="ECO:0000269" key="6">
    <source>
    </source>
</evidence>
<evidence type="ECO:0000269" key="7">
    <source>
    </source>
</evidence>
<evidence type="ECO:0000269" key="8">
    <source>
    </source>
</evidence>
<evidence type="ECO:0000269" key="9">
    <source>
    </source>
</evidence>
<evidence type="ECO:0000269" key="10">
    <source>
    </source>
</evidence>
<evidence type="ECO:0000269" key="11">
    <source>
    </source>
</evidence>
<evidence type="ECO:0000269" key="12">
    <source>
    </source>
</evidence>
<evidence type="ECO:0000269" key="13">
    <source>
    </source>
</evidence>
<evidence type="ECO:0000269" key="14">
    <source>
    </source>
</evidence>
<evidence type="ECO:0000269" key="15">
    <source>
    </source>
</evidence>
<evidence type="ECO:0000269" key="16">
    <source>
    </source>
</evidence>
<evidence type="ECO:0000269" key="17">
    <source>
    </source>
</evidence>
<evidence type="ECO:0000269" key="18">
    <source ref="16"/>
</evidence>
<evidence type="ECO:0000303" key="19">
    <source>
    </source>
</evidence>
<evidence type="ECO:0000305" key="20"/>
<evidence type="ECO:0000312" key="21">
    <source>
        <dbReference type="HGNC" id="HGNC:29634"/>
    </source>
</evidence>
<name>MEG10_HUMAN</name>
<dbReference type="EMBL" id="AB058676">
    <property type="protein sequence ID" value="BAB47409.2"/>
    <property type="status" value="ALT_INIT"/>
    <property type="molecule type" value="mRNA"/>
</dbReference>
<dbReference type="EMBL" id="CR749437">
    <property type="protein sequence ID" value="CAH18275.1"/>
    <property type="molecule type" value="mRNA"/>
</dbReference>
<dbReference type="EMBL" id="CH471062">
    <property type="protein sequence ID" value="EAW62406.1"/>
    <property type="molecule type" value="Genomic_DNA"/>
</dbReference>
<dbReference type="EMBL" id="BC020198">
    <property type="protein sequence ID" value="AAH20198.1"/>
    <property type="molecule type" value="mRNA"/>
</dbReference>
<dbReference type="EMBL" id="BC152478">
    <property type="protein sequence ID" value="AAI52479.1"/>
    <property type="molecule type" value="mRNA"/>
</dbReference>
<dbReference type="CCDS" id="CCDS4142.1">
    <molecule id="Q96KG7-1"/>
</dbReference>
<dbReference type="CCDS" id="CCDS78055.1">
    <molecule id="Q96KG7-2"/>
</dbReference>
<dbReference type="RefSeq" id="NP_001243474.1">
    <molecule id="Q96KG7-1"/>
    <property type="nucleotide sequence ID" value="NM_001256545.2"/>
</dbReference>
<dbReference type="RefSeq" id="NP_001295048.1">
    <molecule id="Q96KG7-2"/>
    <property type="nucleotide sequence ID" value="NM_001308119.2"/>
</dbReference>
<dbReference type="RefSeq" id="NP_001295050.1">
    <molecule id="Q96KG7-2"/>
    <property type="nucleotide sequence ID" value="NM_001308121.2"/>
</dbReference>
<dbReference type="RefSeq" id="NP_115822.1">
    <molecule id="Q96KG7-1"/>
    <property type="nucleotide sequence ID" value="NM_032446.3"/>
</dbReference>
<dbReference type="RefSeq" id="XP_011541996.1">
    <molecule id="Q96KG7-1"/>
    <property type="nucleotide sequence ID" value="XM_011543694.1"/>
</dbReference>
<dbReference type="RefSeq" id="XP_054209676.1">
    <molecule id="Q96KG7-1"/>
    <property type="nucleotide sequence ID" value="XM_054353701.1"/>
</dbReference>
<dbReference type="SMR" id="Q96KG7"/>
<dbReference type="BioGRID" id="124099">
    <property type="interactions" value="14"/>
</dbReference>
<dbReference type="FunCoup" id="Q96KG7">
    <property type="interactions" value="759"/>
</dbReference>
<dbReference type="IntAct" id="Q96KG7">
    <property type="interactions" value="27"/>
</dbReference>
<dbReference type="MINT" id="Q96KG7"/>
<dbReference type="STRING" id="9606.ENSP00000423354"/>
<dbReference type="GlyCosmos" id="Q96KG7">
    <property type="glycosylation" value="2 sites, No reported glycans"/>
</dbReference>
<dbReference type="GlyGen" id="Q96KG7">
    <property type="glycosylation" value="5 sites"/>
</dbReference>
<dbReference type="iPTMnet" id="Q96KG7"/>
<dbReference type="PhosphoSitePlus" id="Q96KG7"/>
<dbReference type="BioMuta" id="MEGF10"/>
<dbReference type="DMDM" id="74716908"/>
<dbReference type="jPOST" id="Q96KG7"/>
<dbReference type="MassIVE" id="Q96KG7"/>
<dbReference type="PaxDb" id="9606-ENSP00000274473"/>
<dbReference type="PeptideAtlas" id="Q96KG7"/>
<dbReference type="ProteomicsDB" id="77067">
    <molecule id="Q96KG7-1"/>
</dbReference>
<dbReference type="ProteomicsDB" id="77068">
    <molecule id="Q96KG7-2"/>
</dbReference>
<dbReference type="Antibodypedia" id="14004">
    <property type="antibodies" value="88 antibodies from 15 providers"/>
</dbReference>
<dbReference type="DNASU" id="84466"/>
<dbReference type="Ensembl" id="ENST00000274473.6">
    <molecule id="Q96KG7-1"/>
    <property type="protein sequence ID" value="ENSP00000274473.6"/>
    <property type="gene ID" value="ENSG00000145794.17"/>
</dbReference>
<dbReference type="Ensembl" id="ENST00000418761.6">
    <molecule id="Q96KG7-2"/>
    <property type="protein sequence ID" value="ENSP00000416284.2"/>
    <property type="gene ID" value="ENSG00000145794.17"/>
</dbReference>
<dbReference type="Ensembl" id="ENST00000503335.7">
    <molecule id="Q96KG7-1"/>
    <property type="protein sequence ID" value="ENSP00000423354.2"/>
    <property type="gene ID" value="ENSG00000145794.17"/>
</dbReference>
<dbReference type="Ensembl" id="ENST00000508365.5">
    <molecule id="Q96KG7-2"/>
    <property type="protein sequence ID" value="ENSP00000423195.1"/>
    <property type="gene ID" value="ENSG00000145794.17"/>
</dbReference>
<dbReference type="GeneID" id="84466"/>
<dbReference type="KEGG" id="hsa:84466"/>
<dbReference type="MANE-Select" id="ENST00000503335.7">
    <property type="protein sequence ID" value="ENSP00000423354.2"/>
    <property type="RefSeq nucleotide sequence ID" value="NM_001256545.2"/>
    <property type="RefSeq protein sequence ID" value="NP_001243474.1"/>
</dbReference>
<dbReference type="UCSC" id="uc003kuh.5">
    <molecule id="Q96KG7-1"/>
    <property type="organism name" value="human"/>
</dbReference>
<dbReference type="AGR" id="HGNC:29634"/>
<dbReference type="CTD" id="84466"/>
<dbReference type="DisGeNET" id="84466"/>
<dbReference type="GeneCards" id="MEGF10"/>
<dbReference type="HGNC" id="HGNC:29634">
    <property type="gene designation" value="MEGF10"/>
</dbReference>
<dbReference type="HPA" id="ENSG00000145794">
    <property type="expression patterns" value="Tissue enhanced (brain, retina)"/>
</dbReference>
<dbReference type="MalaCards" id="MEGF10"/>
<dbReference type="MIM" id="612453">
    <property type="type" value="gene"/>
</dbReference>
<dbReference type="MIM" id="614399">
    <property type="type" value="phenotype"/>
</dbReference>
<dbReference type="MIM" id="620249">
    <property type="type" value="phenotype"/>
</dbReference>
<dbReference type="neXtProt" id="NX_Q96KG7"/>
<dbReference type="OpenTargets" id="ENSG00000145794"/>
<dbReference type="Orphanet" id="439212">
    <property type="disease" value="Early-onset myopathy-areflexia-respiratory distress-dysphagia syndrome"/>
</dbReference>
<dbReference type="PharmGKB" id="PA144596410"/>
<dbReference type="VEuPathDB" id="HostDB:ENSG00000145794"/>
<dbReference type="eggNOG" id="KOG1218">
    <property type="taxonomic scope" value="Eukaryota"/>
</dbReference>
<dbReference type="GeneTree" id="ENSGT00940000157703"/>
<dbReference type="HOGENOM" id="CLU_008281_1_0_1"/>
<dbReference type="InParanoid" id="Q96KG7"/>
<dbReference type="OMA" id="CGKEAHF"/>
<dbReference type="OrthoDB" id="409374at2759"/>
<dbReference type="PAN-GO" id="Q96KG7">
    <property type="GO annotations" value="2 GO annotations based on evolutionary models"/>
</dbReference>
<dbReference type="PhylomeDB" id="Q96KG7"/>
<dbReference type="TreeFam" id="TF332598"/>
<dbReference type="PathwayCommons" id="Q96KG7"/>
<dbReference type="SignaLink" id="Q96KG7"/>
<dbReference type="SIGNOR" id="Q96KG7"/>
<dbReference type="BioGRID-ORCS" id="84466">
    <property type="hits" value="17 hits in 1143 CRISPR screens"/>
</dbReference>
<dbReference type="ChiTaRS" id="MEGF10">
    <property type="organism name" value="human"/>
</dbReference>
<dbReference type="GeneWiki" id="MEGF10"/>
<dbReference type="GenomeRNAi" id="84466"/>
<dbReference type="Pharos" id="Q96KG7">
    <property type="development level" value="Tbio"/>
</dbReference>
<dbReference type="PRO" id="PR:Q96KG7"/>
<dbReference type="Proteomes" id="UP000005640">
    <property type="component" value="Chromosome 5"/>
</dbReference>
<dbReference type="RNAct" id="Q96KG7">
    <property type="molecule type" value="protein"/>
</dbReference>
<dbReference type="Bgee" id="ENSG00000145794">
    <property type="expression patterns" value="Expressed in corpus callosum and 158 other cell types or tissues"/>
</dbReference>
<dbReference type="GO" id="GO:0042995">
    <property type="term" value="C:cell projection"/>
    <property type="evidence" value="ECO:0007669"/>
    <property type="project" value="UniProtKB-KW"/>
</dbReference>
<dbReference type="GO" id="GO:0001891">
    <property type="term" value="C:phagocytic cup"/>
    <property type="evidence" value="ECO:0000314"/>
    <property type="project" value="UniProtKB"/>
</dbReference>
<dbReference type="GO" id="GO:0005886">
    <property type="term" value="C:plasma membrane"/>
    <property type="evidence" value="ECO:0000314"/>
    <property type="project" value="HPA"/>
</dbReference>
<dbReference type="GO" id="GO:0001849">
    <property type="term" value="F:complement component C1q complex binding"/>
    <property type="evidence" value="ECO:0000314"/>
    <property type="project" value="MGI"/>
</dbReference>
<dbReference type="GO" id="GO:0005112">
    <property type="term" value="F:Notch binding"/>
    <property type="evidence" value="ECO:0000353"/>
    <property type="project" value="UniProtKB"/>
</dbReference>
<dbReference type="GO" id="GO:0005044">
    <property type="term" value="F:scavenger receptor activity"/>
    <property type="evidence" value="ECO:0000314"/>
    <property type="project" value="MGI"/>
</dbReference>
<dbReference type="GO" id="GO:0043277">
    <property type="term" value="P:apoptotic cell clearance"/>
    <property type="evidence" value="ECO:0000318"/>
    <property type="project" value="GO_Central"/>
</dbReference>
<dbReference type="GO" id="GO:1902742">
    <property type="term" value="P:apoptotic process involved in development"/>
    <property type="evidence" value="ECO:0000250"/>
    <property type="project" value="UniProtKB"/>
</dbReference>
<dbReference type="GO" id="GO:0043652">
    <property type="term" value="P:engulfment of apoptotic cell"/>
    <property type="evidence" value="ECO:0000250"/>
    <property type="project" value="UniProtKB"/>
</dbReference>
<dbReference type="GO" id="GO:0034109">
    <property type="term" value="P:homotypic cell-cell adhesion"/>
    <property type="evidence" value="ECO:0000314"/>
    <property type="project" value="UniProtKB"/>
</dbReference>
<dbReference type="GO" id="GO:0055001">
    <property type="term" value="P:muscle cell development"/>
    <property type="evidence" value="ECO:0000315"/>
    <property type="project" value="UniProtKB"/>
</dbReference>
<dbReference type="GO" id="GO:0033002">
    <property type="term" value="P:muscle cell proliferation"/>
    <property type="evidence" value="ECO:0000315"/>
    <property type="project" value="UniProtKB"/>
</dbReference>
<dbReference type="GO" id="GO:0048627">
    <property type="term" value="P:myoblast development"/>
    <property type="evidence" value="ECO:0007669"/>
    <property type="project" value="Ensembl"/>
</dbReference>
<dbReference type="GO" id="GO:0051451">
    <property type="term" value="P:myoblast migration"/>
    <property type="evidence" value="ECO:0000315"/>
    <property type="project" value="UniProtKB"/>
</dbReference>
<dbReference type="GO" id="GO:0022409">
    <property type="term" value="P:positive regulation of cell-cell adhesion"/>
    <property type="evidence" value="ECO:0000315"/>
    <property type="project" value="UniProtKB"/>
</dbReference>
<dbReference type="GO" id="GO:2000288">
    <property type="term" value="P:positive regulation of myoblast proliferation"/>
    <property type="evidence" value="ECO:0000315"/>
    <property type="project" value="UniProtKB"/>
</dbReference>
<dbReference type="GO" id="GO:0043654">
    <property type="term" value="P:recognition of apoptotic cell"/>
    <property type="evidence" value="ECO:0007669"/>
    <property type="project" value="Ensembl"/>
</dbReference>
<dbReference type="GO" id="GO:0051147">
    <property type="term" value="P:regulation of muscle cell differentiation"/>
    <property type="evidence" value="ECO:0000315"/>
    <property type="project" value="UniProtKB"/>
</dbReference>
<dbReference type="GO" id="GO:0048641">
    <property type="term" value="P:regulation of skeletal muscle tissue development"/>
    <property type="evidence" value="ECO:0000315"/>
    <property type="project" value="UniProtKB"/>
</dbReference>
<dbReference type="GO" id="GO:0014719">
    <property type="term" value="P:skeletal muscle satellite cell activation"/>
    <property type="evidence" value="ECO:0000250"/>
    <property type="project" value="UniProtKB"/>
</dbReference>
<dbReference type="GO" id="GO:0014816">
    <property type="term" value="P:skeletal muscle satellite cell differentiation"/>
    <property type="evidence" value="ECO:0000315"/>
    <property type="project" value="UniProtKB"/>
</dbReference>
<dbReference type="GO" id="GO:0014841">
    <property type="term" value="P:skeletal muscle satellite cell proliferation"/>
    <property type="evidence" value="ECO:0000250"/>
    <property type="project" value="UniProtKB"/>
</dbReference>
<dbReference type="CDD" id="cd00055">
    <property type="entry name" value="EGF_Lam"/>
    <property type="match status" value="1"/>
</dbReference>
<dbReference type="FunFam" id="2.170.300.10:FF:000016">
    <property type="entry name" value="Multiple epidermal growth factor-like domains 10"/>
    <property type="match status" value="1"/>
</dbReference>
<dbReference type="FunFam" id="2.170.300.10:FF:000014">
    <property type="entry name" value="Multiple epidermal growth factor-like domains protein 10"/>
    <property type="match status" value="1"/>
</dbReference>
<dbReference type="FunFam" id="2.170.300.10:FF:000007">
    <property type="entry name" value="multiple epidermal growth factor-like domains protein 10"/>
    <property type="match status" value="1"/>
</dbReference>
<dbReference type="FunFam" id="2.10.25.10:FF:000114">
    <property type="entry name" value="Multiple epidermal growth factor-like domains protein 11"/>
    <property type="match status" value="1"/>
</dbReference>
<dbReference type="FunFam" id="2.170.300.10:FF:000006">
    <property type="entry name" value="Multiple epidermal growth factor-like domains protein 11"/>
    <property type="match status" value="1"/>
</dbReference>
<dbReference type="FunFam" id="2.170.300.10:FF:000005">
    <property type="entry name" value="multiple epidermal growth factor-like domains protein 11"/>
    <property type="match status" value="1"/>
</dbReference>
<dbReference type="Gene3D" id="2.170.300.10">
    <property type="entry name" value="Tie2 ligand-binding domain superfamily"/>
    <property type="match status" value="6"/>
</dbReference>
<dbReference type="InterPro" id="IPR013032">
    <property type="entry name" value="EGF-like_CS"/>
</dbReference>
<dbReference type="InterPro" id="IPR000742">
    <property type="entry name" value="EGF-like_dom"/>
</dbReference>
<dbReference type="InterPro" id="IPR013111">
    <property type="entry name" value="EGF_extracell"/>
</dbReference>
<dbReference type="InterPro" id="IPR057138">
    <property type="entry name" value="EGF_PEAR1L-like"/>
</dbReference>
<dbReference type="InterPro" id="IPR011489">
    <property type="entry name" value="EMI_domain"/>
</dbReference>
<dbReference type="InterPro" id="IPR002049">
    <property type="entry name" value="LE_dom"/>
</dbReference>
<dbReference type="InterPro" id="IPR052485">
    <property type="entry name" value="MEGF_diff_regulators"/>
</dbReference>
<dbReference type="PANTHER" id="PTHR24052">
    <property type="entry name" value="DELTA-RELATED"/>
    <property type="match status" value="1"/>
</dbReference>
<dbReference type="PANTHER" id="PTHR24052:SF8">
    <property type="entry name" value="NIMROD A, ISOFORM E"/>
    <property type="match status" value="1"/>
</dbReference>
<dbReference type="Pfam" id="PF07974">
    <property type="entry name" value="EGF_2"/>
    <property type="match status" value="1"/>
</dbReference>
<dbReference type="Pfam" id="PF00053">
    <property type="entry name" value="EGF_laminin"/>
    <property type="match status" value="5"/>
</dbReference>
<dbReference type="Pfam" id="PF23301">
    <property type="entry name" value="EGF_PEAR1L"/>
    <property type="match status" value="1"/>
</dbReference>
<dbReference type="Pfam" id="PF12661">
    <property type="entry name" value="hEGF"/>
    <property type="match status" value="6"/>
</dbReference>
<dbReference type="PRINTS" id="PR00011">
    <property type="entry name" value="EGFLAMININ"/>
</dbReference>
<dbReference type="SMART" id="SM00181">
    <property type="entry name" value="EGF"/>
    <property type="match status" value="17"/>
</dbReference>
<dbReference type="SMART" id="SM00180">
    <property type="entry name" value="EGF_Lam"/>
    <property type="match status" value="14"/>
</dbReference>
<dbReference type="PROSITE" id="PS00022">
    <property type="entry name" value="EGF_1"/>
    <property type="match status" value="17"/>
</dbReference>
<dbReference type="PROSITE" id="PS01186">
    <property type="entry name" value="EGF_2"/>
    <property type="match status" value="17"/>
</dbReference>
<dbReference type="PROSITE" id="PS50026">
    <property type="entry name" value="EGF_3"/>
    <property type="match status" value="15"/>
</dbReference>
<dbReference type="PROSITE" id="PS51041">
    <property type="entry name" value="EMI"/>
    <property type="match status" value="1"/>
</dbReference>